<reference key="1">
    <citation type="journal article" date="2000" name="Res. Microbiol.">
        <title>Characterization of the genes encoding the SheA haemolysin in Escherichia coli O157:H7 and Shigella flexneri 2a.</title>
        <authorList>
            <person name="del Castillo F.J."/>
            <person name="Moreno F."/>
            <person name="del Castillo I."/>
        </authorList>
    </citation>
    <scope>NUCLEOTIDE SEQUENCE [GENOMIC DNA]</scope>
    <source>
        <strain>O157:H7 / EHEC</strain>
    </source>
</reference>
<reference key="2">
    <citation type="journal article" date="2001" name="Nature">
        <title>Genome sequence of enterohaemorrhagic Escherichia coli O157:H7.</title>
        <authorList>
            <person name="Perna N.T."/>
            <person name="Plunkett G. III"/>
            <person name="Burland V."/>
            <person name="Mau B."/>
            <person name="Glasner J.D."/>
            <person name="Rose D.J."/>
            <person name="Mayhew G.F."/>
            <person name="Evans P.S."/>
            <person name="Gregor J."/>
            <person name="Kirkpatrick H.A."/>
            <person name="Posfai G."/>
            <person name="Hackett J."/>
            <person name="Klink S."/>
            <person name="Boutin A."/>
            <person name="Shao Y."/>
            <person name="Miller L."/>
            <person name="Grotbeck E.J."/>
            <person name="Davis N.W."/>
            <person name="Lim A."/>
            <person name="Dimalanta E.T."/>
            <person name="Potamousis K."/>
            <person name="Apodaca J."/>
            <person name="Anantharaman T.S."/>
            <person name="Lin J."/>
            <person name="Yen G."/>
            <person name="Schwartz D.C."/>
            <person name="Welch R.A."/>
            <person name="Blattner F.R."/>
        </authorList>
    </citation>
    <scope>NUCLEOTIDE SEQUENCE [LARGE SCALE GENOMIC DNA]</scope>
    <source>
        <strain>O157:H7 / EDL933 / ATCC 700927 / EHEC</strain>
    </source>
</reference>
<reference key="3">
    <citation type="journal article" date="2001" name="DNA Res.">
        <title>Complete genome sequence of enterohemorrhagic Escherichia coli O157:H7 and genomic comparison with a laboratory strain K-12.</title>
        <authorList>
            <person name="Hayashi T."/>
            <person name="Makino K."/>
            <person name="Ohnishi M."/>
            <person name="Kurokawa K."/>
            <person name="Ishii K."/>
            <person name="Yokoyama K."/>
            <person name="Han C.-G."/>
            <person name="Ohtsubo E."/>
            <person name="Nakayama K."/>
            <person name="Murata T."/>
            <person name="Tanaka M."/>
            <person name="Tobe T."/>
            <person name="Iida T."/>
            <person name="Takami H."/>
            <person name="Honda T."/>
            <person name="Sasakawa C."/>
            <person name="Ogasawara N."/>
            <person name="Yasunaga T."/>
            <person name="Kuhara S."/>
            <person name="Shiba T."/>
            <person name="Hattori M."/>
            <person name="Shinagawa H."/>
        </authorList>
    </citation>
    <scope>NUCLEOTIDE SEQUENCE [LARGE SCALE GENOMIC DNA]</scope>
    <source>
        <strain>O157:H7 / Sakai / RIMD 0509952 / EHEC</strain>
    </source>
</reference>
<name>HLYE_ECO57</name>
<proteinExistence type="inferred from homology"/>
<organism>
    <name type="scientific">Escherichia coli O157:H7</name>
    <dbReference type="NCBI Taxonomy" id="83334"/>
    <lineage>
        <taxon>Bacteria</taxon>
        <taxon>Pseudomonadati</taxon>
        <taxon>Pseudomonadota</taxon>
        <taxon>Gammaproteobacteria</taxon>
        <taxon>Enterobacterales</taxon>
        <taxon>Enterobacteriaceae</taxon>
        <taxon>Escherichia</taxon>
    </lineage>
</organism>
<gene>
    <name type="primary">hlyE</name>
    <name type="synonym">clyA</name>
    <name type="synonym">sheA</name>
    <name type="ordered locus">Z1944</name>
    <name type="ordered locus">ECs1677</name>
</gene>
<keyword id="KW-0204">Cytolysis</keyword>
<keyword id="KW-1015">Disulfide bond</keyword>
<keyword id="KW-0354">Hemolysis</keyword>
<keyword id="KW-1032">Host cell membrane</keyword>
<keyword id="KW-1043">Host membrane</keyword>
<keyword id="KW-0472">Membrane</keyword>
<keyword id="KW-0574">Periplasm</keyword>
<keyword id="KW-1185">Reference proteome</keyword>
<keyword id="KW-0964">Secreted</keyword>
<keyword id="KW-0800">Toxin</keyword>
<keyword id="KW-0812">Transmembrane</keyword>
<keyword id="KW-1133">Transmembrane helix</keyword>
<keyword id="KW-0843">Virulence</keyword>
<accession>Q9REB3</accession>
<protein>
    <recommendedName>
        <fullName>Hemolysin E</fullName>
    </recommendedName>
    <alternativeName>
        <fullName>Cytotoxin ClyA</fullName>
    </alternativeName>
    <alternativeName>
        <fullName>Silent hemolysin SheA</fullName>
    </alternativeName>
</protein>
<dbReference type="EMBL" id="AJ238954">
    <property type="protein sequence ID" value="CAB64962.1"/>
    <property type="status" value="ALT_INIT"/>
    <property type="molecule type" value="Genomic_DNA"/>
</dbReference>
<dbReference type="EMBL" id="AE005174">
    <property type="protein sequence ID" value="AAG56033.1"/>
    <property type="status" value="ALT_INIT"/>
    <property type="molecule type" value="Genomic_DNA"/>
</dbReference>
<dbReference type="EMBL" id="BA000007">
    <property type="protein sequence ID" value="BAB35100.2"/>
    <property type="molecule type" value="Genomic_DNA"/>
</dbReference>
<dbReference type="PIR" id="E85696">
    <property type="entry name" value="E85696"/>
</dbReference>
<dbReference type="PIR" id="E90838">
    <property type="entry name" value="E90838"/>
</dbReference>
<dbReference type="RefSeq" id="NP_309704.2">
    <property type="nucleotide sequence ID" value="NC_002695.1"/>
</dbReference>
<dbReference type="RefSeq" id="WP_001304191.1">
    <property type="nucleotide sequence ID" value="NZ_VOAI01000042.1"/>
</dbReference>
<dbReference type="SMR" id="Q9REB3"/>
<dbReference type="STRING" id="155864.Z1944"/>
<dbReference type="GeneID" id="913196"/>
<dbReference type="KEGG" id="ece:Z1944"/>
<dbReference type="KEGG" id="ecs:ECs_1677"/>
<dbReference type="PATRIC" id="fig|386585.9.peg.1774"/>
<dbReference type="eggNOG" id="ENOG502ZB9A">
    <property type="taxonomic scope" value="Bacteria"/>
</dbReference>
<dbReference type="HOGENOM" id="CLU_080941_0_0_6"/>
<dbReference type="Proteomes" id="UP000000558">
    <property type="component" value="Chromosome"/>
</dbReference>
<dbReference type="Proteomes" id="UP000002519">
    <property type="component" value="Chromosome"/>
</dbReference>
<dbReference type="GO" id="GO:0005576">
    <property type="term" value="C:extracellular region"/>
    <property type="evidence" value="ECO:0007669"/>
    <property type="project" value="UniProtKB-SubCell"/>
</dbReference>
<dbReference type="GO" id="GO:0020002">
    <property type="term" value="C:host cell plasma membrane"/>
    <property type="evidence" value="ECO:0007669"/>
    <property type="project" value="UniProtKB-SubCell"/>
</dbReference>
<dbReference type="GO" id="GO:0016020">
    <property type="term" value="C:membrane"/>
    <property type="evidence" value="ECO:0007669"/>
    <property type="project" value="UniProtKB-KW"/>
</dbReference>
<dbReference type="GO" id="GO:0042597">
    <property type="term" value="C:periplasmic space"/>
    <property type="evidence" value="ECO:0007669"/>
    <property type="project" value="UniProtKB-SubCell"/>
</dbReference>
<dbReference type="GO" id="GO:0090729">
    <property type="term" value="F:toxin activity"/>
    <property type="evidence" value="ECO:0007669"/>
    <property type="project" value="UniProtKB-KW"/>
</dbReference>
<dbReference type="GO" id="GO:0044179">
    <property type="term" value="P:hemolysis in another organism"/>
    <property type="evidence" value="ECO:0007669"/>
    <property type="project" value="InterPro"/>
</dbReference>
<dbReference type="CDD" id="cd22651">
    <property type="entry name" value="HlyE-like"/>
    <property type="match status" value="1"/>
</dbReference>
<dbReference type="FunFam" id="1.20.1170.10:FF:000004">
    <property type="entry name" value="Hemolysin E, chromosomal"/>
    <property type="match status" value="1"/>
</dbReference>
<dbReference type="Gene3D" id="1.20.1170.10">
    <property type="match status" value="1"/>
</dbReference>
<dbReference type="InterPro" id="IPR027018">
    <property type="entry name" value="Hemolysin_E"/>
</dbReference>
<dbReference type="NCBIfam" id="NF008477">
    <property type="entry name" value="PRK11376.1"/>
    <property type="match status" value="1"/>
</dbReference>
<dbReference type="Pfam" id="PF06109">
    <property type="entry name" value="HlyE"/>
    <property type="match status" value="1"/>
</dbReference>
<dbReference type="SUPFAM" id="SSF58100">
    <property type="entry name" value="Bacterial hemolysins"/>
    <property type="match status" value="1"/>
</dbReference>
<feature type="initiator methionine" description="Removed" evidence="1">
    <location>
        <position position="1"/>
    </location>
</feature>
<feature type="chain" id="PRO_0000083995" description="Hemolysin E">
    <location>
        <begin position="2"/>
        <end position="303"/>
    </location>
</feature>
<feature type="transmembrane region" description="Helical" evidence="2">
    <location>
        <begin position="183"/>
        <end position="203"/>
    </location>
</feature>
<feature type="disulfide bond" description="In monomeric form" evidence="1">
    <location>
        <begin position="87"/>
        <end position="285"/>
    </location>
</feature>
<comment type="function">
    <text evidence="1">Toxin, which has some hemolytic activity towards mammalian cells. Acts by forming a pore-like structure upon contact with mammalian cells (By similarity).</text>
</comment>
<comment type="subunit">
    <text evidence="1">Monomer and oligomer. In periplasm, it is present as a monomer, while in outer membrane vesicles, it oligomerizes to form a pore structure that is active. The pore is formed by a dodecamer (By similarity).</text>
</comment>
<comment type="subcellular location">
    <subcellularLocation>
        <location evidence="1">Secreted</location>
    </subcellularLocation>
    <subcellularLocation>
        <location evidence="1">Periplasm</location>
    </subcellularLocation>
    <subcellularLocation>
        <location evidence="3">Host cell membrane</location>
        <topology evidence="3">Single-pass membrane protein</topology>
    </subcellularLocation>
    <text evidence="1">Exported from the cell by outer membrane vesicles. Also found in the periplasmic space (By similarity).</text>
</comment>
<comment type="PTM">
    <text evidence="1">In periplasm, it forms a disulfide bond, which prevents the oligomerization. In outer membrane vesicles, the redox status prevents formation of the disulfide bond, leading to oligomerization and pore formation (By similarity).</text>
</comment>
<comment type="similarity">
    <text evidence="3">Belongs to the hemolysin E family.</text>
</comment>
<comment type="sequence caution" evidence="3">
    <conflict type="erroneous initiation">
        <sequence resource="EMBL-CDS" id="AAG56033"/>
    </conflict>
    <text>Extended N-terminus.</text>
</comment>
<comment type="sequence caution" evidence="3">
    <conflict type="erroneous initiation">
        <sequence resource="EMBL-CDS" id="CAB64962"/>
    </conflict>
    <text>Extended N-terminus.</text>
</comment>
<sequence>MTEIVADKTVEVVKNAIETADGALDLYNKYLDQVIPWQTFDETIKELSRFKQEYSQAASVLVGNIKTLLMDSQDKYFEATQTVYEWCGVATQLLAAYILLFDEYNEKKASAQKDILIKVLDDGITKLNEAQKSLLVSSQSFNNASGKLLALDSQLTNDFSEKSSYFQSQVDKIRKEAYAGAAAGVVAGPFGLIISYSIAAGVVEGKLIPELKNKLKSVQSFFTTLSNTVKQANKDIDAAKLKLTTEIAAIGEIKTETETTRFYVDYDDLMLSLLKEAANKMINTCNEYQKRHGKKTLFEVPEV</sequence>
<evidence type="ECO:0000250" key="1"/>
<evidence type="ECO:0000255" key="2"/>
<evidence type="ECO:0000305" key="3"/>